<name>RLMC_CROS8</name>
<sequence>MHCALYDAGRCRSCQWIEQPPDTQLAAKMTDLRTLLAALPVGEWGAPVSGPELAFRNKAKMVVSGSVEKPLLGMLHRDGTPVDLTECPLYPASFYAVFAALKPFIARAGLTPYNVARKRGELKYLLLTQSTLDGGLMLRFVLRSKEKLEQLRAALPGLLAELPQLKVVTANIQPVHMAIMEGDEEIWLTQQQALAESFNGVPLWIRPQSFFQTNPTVASALYATARDWVRALPVNHMWDLFCGVGGFGLHCATPEMTLTGIEIAPEAIASARASAQALGLRNVHFQALDSTDFATGQQAVPDLVLVNPPRRGIGKALCEYLSHMAPRYIVYSSCNAQTMAKDIGEWPGYRIARVQLFDMFPHTAHYEVLTLLVRE</sequence>
<protein>
    <recommendedName>
        <fullName evidence="1">23S rRNA (uracil(747)-C(5))-methyltransferase RlmC</fullName>
        <ecNumber evidence="1">2.1.1.189</ecNumber>
    </recommendedName>
    <alternativeName>
        <fullName evidence="1">23S rRNA(m5U747)-methyltransferase</fullName>
    </alternativeName>
</protein>
<organism>
    <name type="scientific">Cronobacter sakazakii (strain ATCC BAA-894)</name>
    <name type="common">Enterobacter sakazakii</name>
    <dbReference type="NCBI Taxonomy" id="290339"/>
    <lineage>
        <taxon>Bacteria</taxon>
        <taxon>Pseudomonadati</taxon>
        <taxon>Pseudomonadota</taxon>
        <taxon>Gammaproteobacteria</taxon>
        <taxon>Enterobacterales</taxon>
        <taxon>Enterobacteriaceae</taxon>
        <taxon>Cronobacter</taxon>
    </lineage>
</organism>
<proteinExistence type="inferred from homology"/>
<comment type="function">
    <text evidence="1">Catalyzes the formation of 5-methyl-uridine at position 747 (m5U747) in 23S rRNA.</text>
</comment>
<comment type="catalytic activity">
    <reaction evidence="1">
        <text>uridine(747) in 23S rRNA + S-adenosyl-L-methionine = 5-methyluridine(747) in 23S rRNA + S-adenosyl-L-homocysteine + H(+)</text>
        <dbReference type="Rhea" id="RHEA:42628"/>
        <dbReference type="Rhea" id="RHEA-COMP:10154"/>
        <dbReference type="Rhea" id="RHEA-COMP:10155"/>
        <dbReference type="ChEBI" id="CHEBI:15378"/>
        <dbReference type="ChEBI" id="CHEBI:57856"/>
        <dbReference type="ChEBI" id="CHEBI:59789"/>
        <dbReference type="ChEBI" id="CHEBI:65315"/>
        <dbReference type="ChEBI" id="CHEBI:74447"/>
        <dbReference type="EC" id="2.1.1.189"/>
    </reaction>
</comment>
<comment type="similarity">
    <text evidence="1">Belongs to the class I-like SAM-binding methyltransferase superfamily. RNA M5U methyltransferase family. RlmC subfamily.</text>
</comment>
<evidence type="ECO:0000255" key="1">
    <source>
        <dbReference type="HAMAP-Rule" id="MF_01012"/>
    </source>
</evidence>
<dbReference type="EC" id="2.1.1.189" evidence="1"/>
<dbReference type="EMBL" id="CP000783">
    <property type="protein sequence ID" value="ABU77724.1"/>
    <property type="molecule type" value="Genomic_DNA"/>
</dbReference>
<dbReference type="RefSeq" id="WP_012125237.1">
    <property type="nucleotide sequence ID" value="NC_009778.1"/>
</dbReference>
<dbReference type="SMR" id="A7MF48"/>
<dbReference type="KEGG" id="esa:ESA_02478"/>
<dbReference type="PATRIC" id="fig|290339.8.peg.2205"/>
<dbReference type="HOGENOM" id="CLU_014689_0_0_6"/>
<dbReference type="Proteomes" id="UP000000260">
    <property type="component" value="Chromosome"/>
</dbReference>
<dbReference type="GO" id="GO:0051539">
    <property type="term" value="F:4 iron, 4 sulfur cluster binding"/>
    <property type="evidence" value="ECO:0007669"/>
    <property type="project" value="UniProtKB-KW"/>
</dbReference>
<dbReference type="GO" id="GO:0005506">
    <property type="term" value="F:iron ion binding"/>
    <property type="evidence" value="ECO:0007669"/>
    <property type="project" value="UniProtKB-UniRule"/>
</dbReference>
<dbReference type="GO" id="GO:0070041">
    <property type="term" value="F:rRNA (uridine-C5-)-methyltransferase activity"/>
    <property type="evidence" value="ECO:0007669"/>
    <property type="project" value="UniProtKB-UniRule"/>
</dbReference>
<dbReference type="GO" id="GO:0070475">
    <property type="term" value="P:rRNA base methylation"/>
    <property type="evidence" value="ECO:0007669"/>
    <property type="project" value="TreeGrafter"/>
</dbReference>
<dbReference type="CDD" id="cd02440">
    <property type="entry name" value="AdoMet_MTases"/>
    <property type="match status" value="1"/>
</dbReference>
<dbReference type="FunFam" id="2.40.50.1070:FF:000002">
    <property type="entry name" value="23S rRNA (uracil(747)-C(5))-methyltransferase RlmC"/>
    <property type="match status" value="1"/>
</dbReference>
<dbReference type="Gene3D" id="2.40.50.1070">
    <property type="match status" value="1"/>
</dbReference>
<dbReference type="Gene3D" id="3.40.50.150">
    <property type="entry name" value="Vaccinia Virus protein VP39"/>
    <property type="match status" value="1"/>
</dbReference>
<dbReference type="HAMAP" id="MF_01012">
    <property type="entry name" value="23SrRNA_methyltr_RlmC"/>
    <property type="match status" value="1"/>
</dbReference>
<dbReference type="InterPro" id="IPR011825">
    <property type="entry name" value="23SrRNA_MeTrfase_RlmC"/>
</dbReference>
<dbReference type="InterPro" id="IPR030390">
    <property type="entry name" value="MeTrfase_TrmA_AS"/>
</dbReference>
<dbReference type="InterPro" id="IPR030391">
    <property type="entry name" value="MeTrfase_TrmA_CS"/>
</dbReference>
<dbReference type="InterPro" id="IPR029063">
    <property type="entry name" value="SAM-dependent_MTases_sf"/>
</dbReference>
<dbReference type="InterPro" id="IPR010280">
    <property type="entry name" value="U5_MeTrfase_fam"/>
</dbReference>
<dbReference type="NCBIfam" id="TIGR02085">
    <property type="entry name" value="meth_trns_rumB"/>
    <property type="match status" value="1"/>
</dbReference>
<dbReference type="PANTHER" id="PTHR11061">
    <property type="entry name" value="RNA M5U METHYLTRANSFERASE"/>
    <property type="match status" value="1"/>
</dbReference>
<dbReference type="PANTHER" id="PTHR11061:SF30">
    <property type="entry name" value="TRNA (URACIL(54)-C(5))-METHYLTRANSFERASE"/>
    <property type="match status" value="1"/>
</dbReference>
<dbReference type="Pfam" id="PF05958">
    <property type="entry name" value="tRNA_U5-meth_tr"/>
    <property type="match status" value="1"/>
</dbReference>
<dbReference type="SUPFAM" id="SSF53335">
    <property type="entry name" value="S-adenosyl-L-methionine-dependent methyltransferases"/>
    <property type="match status" value="1"/>
</dbReference>
<dbReference type="PROSITE" id="PS51687">
    <property type="entry name" value="SAM_MT_RNA_M5U"/>
    <property type="match status" value="1"/>
</dbReference>
<dbReference type="PROSITE" id="PS01230">
    <property type="entry name" value="TRMA_1"/>
    <property type="match status" value="1"/>
</dbReference>
<dbReference type="PROSITE" id="PS01231">
    <property type="entry name" value="TRMA_2"/>
    <property type="match status" value="1"/>
</dbReference>
<gene>
    <name evidence="1" type="primary">rlmC</name>
    <name type="synonym">rumB</name>
    <name type="ordered locus">ESA_02478</name>
</gene>
<accession>A7MF48</accession>
<feature type="chain" id="PRO_1000063001" description="23S rRNA (uracil(747)-C(5))-methyltransferase RlmC">
    <location>
        <begin position="1"/>
        <end position="375"/>
    </location>
</feature>
<feature type="active site" description="Nucleophile" evidence="1">
    <location>
        <position position="334"/>
    </location>
</feature>
<feature type="binding site" evidence="1">
    <location>
        <position position="3"/>
    </location>
    <ligand>
        <name>[4Fe-4S] cluster</name>
        <dbReference type="ChEBI" id="CHEBI:49883"/>
    </ligand>
</feature>
<feature type="binding site" evidence="1">
    <location>
        <position position="11"/>
    </location>
    <ligand>
        <name>[4Fe-4S] cluster</name>
        <dbReference type="ChEBI" id="CHEBI:49883"/>
    </ligand>
</feature>
<feature type="binding site" evidence="1">
    <location>
        <position position="14"/>
    </location>
    <ligand>
        <name>[4Fe-4S] cluster</name>
        <dbReference type="ChEBI" id="CHEBI:49883"/>
    </ligand>
</feature>
<feature type="binding site" evidence="1">
    <location>
        <position position="87"/>
    </location>
    <ligand>
        <name>[4Fe-4S] cluster</name>
        <dbReference type="ChEBI" id="CHEBI:49883"/>
    </ligand>
</feature>
<feature type="binding site" evidence="1">
    <location>
        <position position="212"/>
    </location>
    <ligand>
        <name>S-adenosyl-L-methionine</name>
        <dbReference type="ChEBI" id="CHEBI:59789"/>
    </ligand>
</feature>
<feature type="binding site" evidence="1">
    <location>
        <position position="241"/>
    </location>
    <ligand>
        <name>S-adenosyl-L-methionine</name>
        <dbReference type="ChEBI" id="CHEBI:59789"/>
    </ligand>
</feature>
<feature type="binding site" evidence="1">
    <location>
        <position position="262"/>
    </location>
    <ligand>
        <name>S-adenosyl-L-methionine</name>
        <dbReference type="ChEBI" id="CHEBI:59789"/>
    </ligand>
</feature>
<feature type="binding site" evidence="1">
    <location>
        <position position="307"/>
    </location>
    <ligand>
        <name>S-adenosyl-L-methionine</name>
        <dbReference type="ChEBI" id="CHEBI:59789"/>
    </ligand>
</feature>
<reference key="1">
    <citation type="journal article" date="2010" name="PLoS ONE">
        <title>Genome sequence of Cronobacter sakazakii BAA-894 and comparative genomic hybridization analysis with other Cronobacter species.</title>
        <authorList>
            <person name="Kucerova E."/>
            <person name="Clifton S.W."/>
            <person name="Xia X.Q."/>
            <person name="Long F."/>
            <person name="Porwollik S."/>
            <person name="Fulton L."/>
            <person name="Fronick C."/>
            <person name="Minx P."/>
            <person name="Kyung K."/>
            <person name="Warren W."/>
            <person name="Fulton R."/>
            <person name="Feng D."/>
            <person name="Wollam A."/>
            <person name="Shah N."/>
            <person name="Bhonagiri V."/>
            <person name="Nash W.E."/>
            <person name="Hallsworth-Pepin K."/>
            <person name="Wilson R.K."/>
            <person name="McClelland M."/>
            <person name="Forsythe S.J."/>
        </authorList>
    </citation>
    <scope>NUCLEOTIDE SEQUENCE [LARGE SCALE GENOMIC DNA]</scope>
    <source>
        <strain>ATCC BAA-894</strain>
    </source>
</reference>
<keyword id="KW-0004">4Fe-4S</keyword>
<keyword id="KW-0408">Iron</keyword>
<keyword id="KW-0411">Iron-sulfur</keyword>
<keyword id="KW-0479">Metal-binding</keyword>
<keyword id="KW-0489">Methyltransferase</keyword>
<keyword id="KW-1185">Reference proteome</keyword>
<keyword id="KW-0698">rRNA processing</keyword>
<keyword id="KW-0949">S-adenosyl-L-methionine</keyword>
<keyword id="KW-0808">Transferase</keyword>